<name>NA1B_BUNCN</name>
<proteinExistence type="evidence at protein level"/>
<accession>P0C7P9</accession>
<reference key="1">
    <citation type="journal article" date="2008" name="Toxicon">
        <title>Revisiting cangitoxin, a sea anemone peptide: purification and characterization of cangitoxins II and III from the venom of Bunodosoma cangicum.</title>
        <authorList>
            <person name="Zaharenko A.J."/>
            <person name="Ferreira W.A. Jr."/>
            <person name="de Oliveira J.S."/>
            <person name="Konno K."/>
            <person name="Richardson M."/>
            <person name="Schiavon E."/>
            <person name="Wanke E."/>
            <person name="de Freitas J.C."/>
        </authorList>
    </citation>
    <scope>PROTEIN SEQUENCE</scope>
    <scope>FUNCTION</scope>
    <scope>MASS SPECTROMETRY</scope>
    <scope>SUBCELLULAR LOCATION</scope>
    <source>
        <tissue>Nematoblast</tissue>
    </source>
</reference>
<reference key="2">
    <citation type="journal article" date="2012" name="Peptides">
        <title>Characterization of selectivity and pharmacophores of type 1 sea anemone toxins by screening seven Na(v) sodium channel isoforms.</title>
        <authorList>
            <person name="Zaharenko A.J."/>
            <person name="Schiavon E."/>
            <person name="Ferreira W.A. Jr."/>
            <person name="Lecchi M."/>
            <person name="de Freitas J.C."/>
            <person name="Richardson M."/>
            <person name="Wanke E."/>
        </authorList>
    </citation>
    <scope>FUNCTION</scope>
</reference>
<reference key="3">
    <citation type="journal article" date="2009" name="Toxicon">
        <title>Actions of sea anemone type 1 neurotoxins on voltage-gated sodium channel isoforms.</title>
        <authorList>
            <person name="Wanke E."/>
            <person name="Zaharenko A.J."/>
            <person name="Redaelli E."/>
            <person name="Schiavon E."/>
        </authorList>
    </citation>
    <scope>REVIEW</scope>
</reference>
<reference key="4">
    <citation type="journal article" date="2012" name="Toxicon">
        <title>Development of a rational nomenclature for naming peptide and protein toxins from sea anemones.</title>
        <authorList>
            <person name="Oliveira J.S."/>
            <person name="Fuentes-Silva D."/>
            <person name="King G.F."/>
        </authorList>
    </citation>
    <scope>NOMENCLATURE</scope>
</reference>
<keyword id="KW-0903">Direct protein sequencing</keyword>
<keyword id="KW-1015">Disulfide bond</keyword>
<keyword id="KW-0872">Ion channel impairing toxin</keyword>
<keyword id="KW-0166">Nematocyst</keyword>
<keyword id="KW-0528">Neurotoxin</keyword>
<keyword id="KW-0964">Secreted</keyword>
<keyword id="KW-0800">Toxin</keyword>
<keyword id="KW-0738">Voltage-gated sodium channel impairing toxin</keyword>
<dbReference type="SMR" id="P0C7P9"/>
<dbReference type="GO" id="GO:0005576">
    <property type="term" value="C:extracellular region"/>
    <property type="evidence" value="ECO:0007669"/>
    <property type="project" value="UniProtKB-SubCell"/>
</dbReference>
<dbReference type="GO" id="GO:0042151">
    <property type="term" value="C:nematocyst"/>
    <property type="evidence" value="ECO:0007669"/>
    <property type="project" value="UniProtKB-SubCell"/>
</dbReference>
<dbReference type="GO" id="GO:0017080">
    <property type="term" value="F:sodium channel regulator activity"/>
    <property type="evidence" value="ECO:0007669"/>
    <property type="project" value="UniProtKB-KW"/>
</dbReference>
<dbReference type="GO" id="GO:0090729">
    <property type="term" value="F:toxin activity"/>
    <property type="evidence" value="ECO:0007669"/>
    <property type="project" value="UniProtKB-KW"/>
</dbReference>
<dbReference type="GO" id="GO:0009966">
    <property type="term" value="P:regulation of signal transduction"/>
    <property type="evidence" value="ECO:0007669"/>
    <property type="project" value="InterPro"/>
</dbReference>
<dbReference type="Gene3D" id="2.20.20.10">
    <property type="entry name" value="Anthopleurin-A"/>
    <property type="match status" value="1"/>
</dbReference>
<dbReference type="InterPro" id="IPR000693">
    <property type="entry name" value="Anenome_toxin"/>
</dbReference>
<dbReference type="InterPro" id="IPR023355">
    <property type="entry name" value="Myo_ane_neurotoxin_sf"/>
</dbReference>
<dbReference type="Pfam" id="PF00706">
    <property type="entry name" value="Toxin_4"/>
    <property type="match status" value="1"/>
</dbReference>
<dbReference type="PIRSF" id="PIRSF001905">
    <property type="entry name" value="Anenome_toxin"/>
    <property type="match status" value="1"/>
</dbReference>
<dbReference type="SUPFAM" id="SSF57392">
    <property type="entry name" value="Defensin-like"/>
    <property type="match status" value="1"/>
</dbReference>
<comment type="function">
    <text evidence="2">Binds to the sodium channels Nav1.1/SCN1A (EC(50)=165 nM), Nav1.5/SCN5A (EC(50)=103 nM) and Nav1.6/SCN8A (EC(50)=133 nM), thereby delaying their inactivation (PubMed:18342901, PubMed:21802465). Also inhibits Nav1.2/SCN2A, Nav1.3/SCN3A, and Nav1.4/SCN4A, but to a lesser extent (PubMed:21802465). Inhibits Nav1.5 differently from isoforms Nav1.1 and Nav1.6. In Nav1.5 the effect consists in a right-shift of inactivation; whereas in both Nav1.1 and Nav1.6 the effect consists in an incomplete inactivation (PubMed:21802465).</text>
</comment>
<comment type="subcellular location">
    <subcellularLocation>
        <location evidence="2">Secreted</location>
    </subcellularLocation>
    <subcellularLocation>
        <location evidence="2">Nematocyst</location>
    </subcellularLocation>
</comment>
<comment type="mass spectrometry"/>
<comment type="miscellaneous">
    <text evidence="3">vDoes not show activity on Nav1.7/SCN9A.</text>
</comment>
<comment type="similarity">
    <text evidence="6">Belongs to the sea anemone sodium channel inhibitory toxin family. Type I subfamily.</text>
</comment>
<sequence>GVACRCDSDGPTVRGDSLSGTLWLTGGCPSGWHNCRGSGPFIGYCCKK</sequence>
<evidence type="ECO:0000250" key="1">
    <source>
        <dbReference type="UniProtKB" id="P01530"/>
    </source>
</evidence>
<evidence type="ECO:0000269" key="2">
    <source>
    </source>
</evidence>
<evidence type="ECO:0000269" key="3">
    <source>
    </source>
</evidence>
<evidence type="ECO:0000303" key="4">
    <source>
    </source>
</evidence>
<evidence type="ECO:0000303" key="5">
    <source>
    </source>
</evidence>
<evidence type="ECO:0000305" key="6"/>
<protein>
    <recommendedName>
        <fullName evidence="5">Delta-actitoxin-Bcg1b</fullName>
        <shortName evidence="5">Delta-AITX-Bcg1b</shortName>
    </recommendedName>
    <alternativeName>
        <fullName evidence="4">Cangitoxin II</fullName>
    </alternativeName>
    <alternativeName>
        <fullName evidence="6">Cangitoxin-2</fullName>
    </alternativeName>
    <alternativeName>
        <fullName>Cangitoxin-II</fullName>
        <shortName evidence="4">CGTX-II</shortName>
    </alternativeName>
</protein>
<organism>
    <name type="scientific">Bunodosoma cangicum</name>
    <name type="common">Sea anemone</name>
    <dbReference type="NCBI Taxonomy" id="138296"/>
    <lineage>
        <taxon>Eukaryota</taxon>
        <taxon>Metazoa</taxon>
        <taxon>Cnidaria</taxon>
        <taxon>Anthozoa</taxon>
        <taxon>Hexacorallia</taxon>
        <taxon>Actiniaria</taxon>
        <taxon>Actiniidae</taxon>
        <taxon>Bunodosoma</taxon>
    </lineage>
</organism>
<feature type="chain" id="PRO_0000342623" description="Delta-actitoxin-Bcg1b" evidence="2">
    <location>
        <begin position="1"/>
        <end position="48"/>
    </location>
</feature>
<feature type="disulfide bond" evidence="1">
    <location>
        <begin position="4"/>
        <end position="45"/>
    </location>
</feature>
<feature type="disulfide bond" evidence="1">
    <location>
        <begin position="6"/>
        <end position="35"/>
    </location>
</feature>
<feature type="disulfide bond" evidence="1">
    <location>
        <begin position="28"/>
        <end position="46"/>
    </location>
</feature>